<feature type="chain" id="PRO_1000094755" description="S-adenosylmethionine:tRNA ribosyltransferase-isomerase">
    <location>
        <begin position="1"/>
        <end position="355"/>
    </location>
</feature>
<accession>B1JVY9</accession>
<sequence length="355" mass="38735">MFTLSDFDFNLPPELIAQTALPDRTASRLLEVDGSVAPARLVDRHFAELPSCIAPGDLLVFNDTKVLKARFFGQKASGGKIEVLIERVTGTHTALAQIRASKSPGAGTTLRLADAFDVTVGERVEPFFTLHFPAPCLDLIEQHGRLPLPPYIEHDADATDETRYQTVYASNPGAVAAPTAGLHFDQPLLEKLDAMGVERATLTLHVGAGTFQPVRVENIAEHKMHSEWYDLPQSLVDKIAATRARGGNVIAVGTTSMRALEAAARSADEAGRPLAATQAETDIFITPGYRFRVVDRLVTNFHLPKSTLLMLVSAFAGVETIRAAYRHAIEERYRFFSYGDAMLLTRRDTPEAPGA</sequence>
<name>QUEA_BURO0</name>
<reference key="1">
    <citation type="submission" date="2008-02" db="EMBL/GenBank/DDBJ databases">
        <title>Complete sequence of chromosome 1 of Burkholderia cenocepacia MC0-3.</title>
        <authorList>
            <person name="Copeland A."/>
            <person name="Lucas S."/>
            <person name="Lapidus A."/>
            <person name="Barry K."/>
            <person name="Bruce D."/>
            <person name="Goodwin L."/>
            <person name="Glavina del Rio T."/>
            <person name="Dalin E."/>
            <person name="Tice H."/>
            <person name="Pitluck S."/>
            <person name="Chain P."/>
            <person name="Malfatti S."/>
            <person name="Shin M."/>
            <person name="Vergez L."/>
            <person name="Schmutz J."/>
            <person name="Larimer F."/>
            <person name="Land M."/>
            <person name="Hauser L."/>
            <person name="Kyrpides N."/>
            <person name="Mikhailova N."/>
            <person name="Tiedje J."/>
            <person name="Richardson P."/>
        </authorList>
    </citation>
    <scope>NUCLEOTIDE SEQUENCE [LARGE SCALE GENOMIC DNA]</scope>
    <source>
        <strain>MC0-3</strain>
    </source>
</reference>
<gene>
    <name evidence="1" type="primary">queA</name>
    <name type="ordered locus">Bcenmc03_0691</name>
</gene>
<proteinExistence type="inferred from homology"/>
<keyword id="KW-0963">Cytoplasm</keyword>
<keyword id="KW-0671">Queuosine biosynthesis</keyword>
<keyword id="KW-0949">S-adenosyl-L-methionine</keyword>
<keyword id="KW-0808">Transferase</keyword>
<evidence type="ECO:0000255" key="1">
    <source>
        <dbReference type="HAMAP-Rule" id="MF_00113"/>
    </source>
</evidence>
<organism>
    <name type="scientific">Burkholderia orbicola (strain MC0-3)</name>
    <dbReference type="NCBI Taxonomy" id="406425"/>
    <lineage>
        <taxon>Bacteria</taxon>
        <taxon>Pseudomonadati</taxon>
        <taxon>Pseudomonadota</taxon>
        <taxon>Betaproteobacteria</taxon>
        <taxon>Burkholderiales</taxon>
        <taxon>Burkholderiaceae</taxon>
        <taxon>Burkholderia</taxon>
        <taxon>Burkholderia cepacia complex</taxon>
        <taxon>Burkholderia orbicola</taxon>
    </lineage>
</organism>
<protein>
    <recommendedName>
        <fullName evidence="1">S-adenosylmethionine:tRNA ribosyltransferase-isomerase</fullName>
        <ecNumber evidence="1">2.4.99.17</ecNumber>
    </recommendedName>
    <alternativeName>
        <fullName evidence="1">Queuosine biosynthesis protein QueA</fullName>
    </alternativeName>
</protein>
<dbReference type="EC" id="2.4.99.17" evidence="1"/>
<dbReference type="EMBL" id="CP000958">
    <property type="protein sequence ID" value="ACA89869.1"/>
    <property type="molecule type" value="Genomic_DNA"/>
</dbReference>
<dbReference type="RefSeq" id="WP_012327928.1">
    <property type="nucleotide sequence ID" value="NC_010508.1"/>
</dbReference>
<dbReference type="SMR" id="B1JVY9"/>
<dbReference type="GeneID" id="83047491"/>
<dbReference type="KEGG" id="bcm:Bcenmc03_0691"/>
<dbReference type="HOGENOM" id="CLU_039110_1_0_4"/>
<dbReference type="UniPathway" id="UPA00392"/>
<dbReference type="Proteomes" id="UP000002169">
    <property type="component" value="Chromosome 1"/>
</dbReference>
<dbReference type="GO" id="GO:0005737">
    <property type="term" value="C:cytoplasm"/>
    <property type="evidence" value="ECO:0007669"/>
    <property type="project" value="UniProtKB-SubCell"/>
</dbReference>
<dbReference type="GO" id="GO:0051075">
    <property type="term" value="F:S-adenosylmethionine:tRNA ribosyltransferase-isomerase activity"/>
    <property type="evidence" value="ECO:0007669"/>
    <property type="project" value="UniProtKB-EC"/>
</dbReference>
<dbReference type="GO" id="GO:0008616">
    <property type="term" value="P:queuosine biosynthetic process"/>
    <property type="evidence" value="ECO:0007669"/>
    <property type="project" value="UniProtKB-UniRule"/>
</dbReference>
<dbReference type="GO" id="GO:0002099">
    <property type="term" value="P:tRNA wobble guanine modification"/>
    <property type="evidence" value="ECO:0007669"/>
    <property type="project" value="TreeGrafter"/>
</dbReference>
<dbReference type="FunFam" id="3.40.1780.10:FF:000001">
    <property type="entry name" value="S-adenosylmethionine:tRNA ribosyltransferase-isomerase"/>
    <property type="match status" value="1"/>
</dbReference>
<dbReference type="Gene3D" id="2.40.10.240">
    <property type="entry name" value="QueA-like"/>
    <property type="match status" value="1"/>
</dbReference>
<dbReference type="Gene3D" id="3.40.1780.10">
    <property type="entry name" value="QueA-like"/>
    <property type="match status" value="1"/>
</dbReference>
<dbReference type="HAMAP" id="MF_00113">
    <property type="entry name" value="QueA"/>
    <property type="match status" value="1"/>
</dbReference>
<dbReference type="InterPro" id="IPR003699">
    <property type="entry name" value="QueA"/>
</dbReference>
<dbReference type="InterPro" id="IPR042118">
    <property type="entry name" value="QueA_dom1"/>
</dbReference>
<dbReference type="InterPro" id="IPR042119">
    <property type="entry name" value="QueA_dom2"/>
</dbReference>
<dbReference type="InterPro" id="IPR036100">
    <property type="entry name" value="QueA_sf"/>
</dbReference>
<dbReference type="NCBIfam" id="NF001140">
    <property type="entry name" value="PRK00147.1"/>
    <property type="match status" value="1"/>
</dbReference>
<dbReference type="NCBIfam" id="TIGR00113">
    <property type="entry name" value="queA"/>
    <property type="match status" value="1"/>
</dbReference>
<dbReference type="PANTHER" id="PTHR30307">
    <property type="entry name" value="S-ADENOSYLMETHIONINE:TRNA RIBOSYLTRANSFERASE-ISOMERASE"/>
    <property type="match status" value="1"/>
</dbReference>
<dbReference type="PANTHER" id="PTHR30307:SF0">
    <property type="entry name" value="S-ADENOSYLMETHIONINE:TRNA RIBOSYLTRANSFERASE-ISOMERASE"/>
    <property type="match status" value="1"/>
</dbReference>
<dbReference type="Pfam" id="PF02547">
    <property type="entry name" value="Queuosine_synth"/>
    <property type="match status" value="1"/>
</dbReference>
<dbReference type="SUPFAM" id="SSF111337">
    <property type="entry name" value="QueA-like"/>
    <property type="match status" value="1"/>
</dbReference>
<comment type="function">
    <text evidence="1">Transfers and isomerizes the ribose moiety from AdoMet to the 7-aminomethyl group of 7-deazaguanine (preQ1-tRNA) to give epoxyqueuosine (oQ-tRNA).</text>
</comment>
<comment type="catalytic activity">
    <reaction evidence="1">
        <text>7-aminomethyl-7-carbaguanosine(34) in tRNA + S-adenosyl-L-methionine = epoxyqueuosine(34) in tRNA + adenine + L-methionine + 2 H(+)</text>
        <dbReference type="Rhea" id="RHEA:32155"/>
        <dbReference type="Rhea" id="RHEA-COMP:10342"/>
        <dbReference type="Rhea" id="RHEA-COMP:18582"/>
        <dbReference type="ChEBI" id="CHEBI:15378"/>
        <dbReference type="ChEBI" id="CHEBI:16708"/>
        <dbReference type="ChEBI" id="CHEBI:57844"/>
        <dbReference type="ChEBI" id="CHEBI:59789"/>
        <dbReference type="ChEBI" id="CHEBI:82833"/>
        <dbReference type="ChEBI" id="CHEBI:194443"/>
        <dbReference type="EC" id="2.4.99.17"/>
    </reaction>
</comment>
<comment type="pathway">
    <text evidence="1">tRNA modification; tRNA-queuosine biosynthesis.</text>
</comment>
<comment type="subunit">
    <text evidence="1">Monomer.</text>
</comment>
<comment type="subcellular location">
    <subcellularLocation>
        <location evidence="1">Cytoplasm</location>
    </subcellularLocation>
</comment>
<comment type="similarity">
    <text evidence="1">Belongs to the QueA family.</text>
</comment>